<accession>C1CAN6</accession>
<organism>
    <name type="scientific">Streptococcus pneumoniae (strain 70585)</name>
    <dbReference type="NCBI Taxonomy" id="488221"/>
    <lineage>
        <taxon>Bacteria</taxon>
        <taxon>Bacillati</taxon>
        <taxon>Bacillota</taxon>
        <taxon>Bacilli</taxon>
        <taxon>Lactobacillales</taxon>
        <taxon>Streptococcaceae</taxon>
        <taxon>Streptococcus</taxon>
    </lineage>
</organism>
<proteinExistence type="inferred from homology"/>
<gene>
    <name evidence="1" type="primary">rpsM</name>
    <name type="ordered locus">SP70585_0289</name>
</gene>
<feature type="chain" id="PRO_1000165639" description="Small ribosomal subunit protein uS13">
    <location>
        <begin position="1"/>
        <end position="121"/>
    </location>
</feature>
<feature type="region of interest" description="Disordered" evidence="2">
    <location>
        <begin position="96"/>
        <end position="121"/>
    </location>
</feature>
<feature type="compositionally biased region" description="Basic residues" evidence="2">
    <location>
        <begin position="106"/>
        <end position="121"/>
    </location>
</feature>
<sequence>MARIAGVDIPNDKRVVISLTYVYGIGLATSKKILAAAGISEDVRVRDLTSDQEDAIRREVDAIKVEGDLRREVNLNIKRLMEIGSYRGIRHRRGLPVRGQNTKNNARTRKGKAVAIAGKKK</sequence>
<reference key="1">
    <citation type="journal article" date="2010" name="Genome Biol.">
        <title>Structure and dynamics of the pan-genome of Streptococcus pneumoniae and closely related species.</title>
        <authorList>
            <person name="Donati C."/>
            <person name="Hiller N.L."/>
            <person name="Tettelin H."/>
            <person name="Muzzi A."/>
            <person name="Croucher N.J."/>
            <person name="Angiuoli S.V."/>
            <person name="Oggioni M."/>
            <person name="Dunning Hotopp J.C."/>
            <person name="Hu F.Z."/>
            <person name="Riley D.R."/>
            <person name="Covacci A."/>
            <person name="Mitchell T.J."/>
            <person name="Bentley S.D."/>
            <person name="Kilian M."/>
            <person name="Ehrlich G.D."/>
            <person name="Rappuoli R."/>
            <person name="Moxon E.R."/>
            <person name="Masignani V."/>
        </authorList>
    </citation>
    <scope>NUCLEOTIDE SEQUENCE [LARGE SCALE GENOMIC DNA]</scope>
    <source>
        <strain>70585</strain>
    </source>
</reference>
<evidence type="ECO:0000255" key="1">
    <source>
        <dbReference type="HAMAP-Rule" id="MF_01315"/>
    </source>
</evidence>
<evidence type="ECO:0000256" key="2">
    <source>
        <dbReference type="SAM" id="MobiDB-lite"/>
    </source>
</evidence>
<evidence type="ECO:0000305" key="3"/>
<dbReference type="EMBL" id="CP000918">
    <property type="protein sequence ID" value="ACO16847.1"/>
    <property type="molecule type" value="Genomic_DNA"/>
</dbReference>
<dbReference type="RefSeq" id="WP_000090781.1">
    <property type="nucleotide sequence ID" value="NC_012468.1"/>
</dbReference>
<dbReference type="SMR" id="C1CAN6"/>
<dbReference type="GeneID" id="93738981"/>
<dbReference type="KEGG" id="snm:SP70585_0289"/>
<dbReference type="HOGENOM" id="CLU_103849_1_1_9"/>
<dbReference type="Proteomes" id="UP000002211">
    <property type="component" value="Chromosome"/>
</dbReference>
<dbReference type="GO" id="GO:0005829">
    <property type="term" value="C:cytosol"/>
    <property type="evidence" value="ECO:0007669"/>
    <property type="project" value="TreeGrafter"/>
</dbReference>
<dbReference type="GO" id="GO:0015935">
    <property type="term" value="C:small ribosomal subunit"/>
    <property type="evidence" value="ECO:0007669"/>
    <property type="project" value="TreeGrafter"/>
</dbReference>
<dbReference type="GO" id="GO:0019843">
    <property type="term" value="F:rRNA binding"/>
    <property type="evidence" value="ECO:0007669"/>
    <property type="project" value="UniProtKB-UniRule"/>
</dbReference>
<dbReference type="GO" id="GO:0003735">
    <property type="term" value="F:structural constituent of ribosome"/>
    <property type="evidence" value="ECO:0007669"/>
    <property type="project" value="InterPro"/>
</dbReference>
<dbReference type="GO" id="GO:0000049">
    <property type="term" value="F:tRNA binding"/>
    <property type="evidence" value="ECO:0007669"/>
    <property type="project" value="UniProtKB-UniRule"/>
</dbReference>
<dbReference type="GO" id="GO:0006412">
    <property type="term" value="P:translation"/>
    <property type="evidence" value="ECO:0007669"/>
    <property type="project" value="UniProtKB-UniRule"/>
</dbReference>
<dbReference type="FunFam" id="1.10.8.50:FF:000001">
    <property type="entry name" value="30S ribosomal protein S13"/>
    <property type="match status" value="1"/>
</dbReference>
<dbReference type="FunFam" id="4.10.910.10:FF:000001">
    <property type="entry name" value="30S ribosomal protein S13"/>
    <property type="match status" value="1"/>
</dbReference>
<dbReference type="Gene3D" id="1.10.8.50">
    <property type="match status" value="1"/>
</dbReference>
<dbReference type="Gene3D" id="4.10.910.10">
    <property type="entry name" value="30s ribosomal protein s13, domain 2"/>
    <property type="match status" value="1"/>
</dbReference>
<dbReference type="HAMAP" id="MF_01315">
    <property type="entry name" value="Ribosomal_uS13"/>
    <property type="match status" value="1"/>
</dbReference>
<dbReference type="InterPro" id="IPR027437">
    <property type="entry name" value="Rbsml_uS13_C"/>
</dbReference>
<dbReference type="InterPro" id="IPR001892">
    <property type="entry name" value="Ribosomal_uS13"/>
</dbReference>
<dbReference type="InterPro" id="IPR010979">
    <property type="entry name" value="Ribosomal_uS13-like_H2TH"/>
</dbReference>
<dbReference type="InterPro" id="IPR019980">
    <property type="entry name" value="Ribosomal_uS13_bac-type"/>
</dbReference>
<dbReference type="InterPro" id="IPR018269">
    <property type="entry name" value="Ribosomal_uS13_CS"/>
</dbReference>
<dbReference type="NCBIfam" id="TIGR03631">
    <property type="entry name" value="uS13_bact"/>
    <property type="match status" value="1"/>
</dbReference>
<dbReference type="PANTHER" id="PTHR10871">
    <property type="entry name" value="30S RIBOSOMAL PROTEIN S13/40S RIBOSOMAL PROTEIN S18"/>
    <property type="match status" value="1"/>
</dbReference>
<dbReference type="PANTHER" id="PTHR10871:SF1">
    <property type="entry name" value="SMALL RIBOSOMAL SUBUNIT PROTEIN US13M"/>
    <property type="match status" value="1"/>
</dbReference>
<dbReference type="Pfam" id="PF00416">
    <property type="entry name" value="Ribosomal_S13"/>
    <property type="match status" value="1"/>
</dbReference>
<dbReference type="PIRSF" id="PIRSF002134">
    <property type="entry name" value="Ribosomal_S13"/>
    <property type="match status" value="1"/>
</dbReference>
<dbReference type="SUPFAM" id="SSF46946">
    <property type="entry name" value="S13-like H2TH domain"/>
    <property type="match status" value="1"/>
</dbReference>
<dbReference type="PROSITE" id="PS00646">
    <property type="entry name" value="RIBOSOMAL_S13_1"/>
    <property type="match status" value="1"/>
</dbReference>
<dbReference type="PROSITE" id="PS50159">
    <property type="entry name" value="RIBOSOMAL_S13_2"/>
    <property type="match status" value="1"/>
</dbReference>
<keyword id="KW-0687">Ribonucleoprotein</keyword>
<keyword id="KW-0689">Ribosomal protein</keyword>
<keyword id="KW-0694">RNA-binding</keyword>
<keyword id="KW-0699">rRNA-binding</keyword>
<keyword id="KW-0820">tRNA-binding</keyword>
<name>RS13_STRP7</name>
<comment type="function">
    <text evidence="1">Located at the top of the head of the 30S subunit, it contacts several helices of the 16S rRNA. In the 70S ribosome it contacts the 23S rRNA (bridge B1a) and protein L5 of the 50S subunit (bridge B1b), connecting the 2 subunits; these bridges are implicated in subunit movement. Contacts the tRNAs in the A and P-sites.</text>
</comment>
<comment type="subunit">
    <text evidence="1">Part of the 30S ribosomal subunit. Forms a loose heterodimer with protein S19. Forms two bridges to the 50S subunit in the 70S ribosome.</text>
</comment>
<comment type="similarity">
    <text evidence="1">Belongs to the universal ribosomal protein uS13 family.</text>
</comment>
<protein>
    <recommendedName>
        <fullName evidence="1">Small ribosomal subunit protein uS13</fullName>
    </recommendedName>
    <alternativeName>
        <fullName evidence="3">30S ribosomal protein S13</fullName>
    </alternativeName>
</protein>